<reference key="1">
    <citation type="journal article" date="2005" name="Nat. Biotechnol.">
        <title>Complete genome sequence of the acetic acid bacterium Gluconobacter oxydans.</title>
        <authorList>
            <person name="Prust C."/>
            <person name="Hoffmeister M."/>
            <person name="Liesegang H."/>
            <person name="Wiezer A."/>
            <person name="Fricke W.F."/>
            <person name="Ehrenreich A."/>
            <person name="Gottschalk G."/>
            <person name="Deppenmeier U."/>
        </authorList>
    </citation>
    <scope>NUCLEOTIDE SEQUENCE [LARGE SCALE GENOMIC DNA]</scope>
    <source>
        <strain>621H</strain>
    </source>
</reference>
<organism>
    <name type="scientific">Gluconobacter oxydans (strain 621H)</name>
    <name type="common">Gluconobacter suboxydans</name>
    <dbReference type="NCBI Taxonomy" id="290633"/>
    <lineage>
        <taxon>Bacteria</taxon>
        <taxon>Pseudomonadati</taxon>
        <taxon>Pseudomonadota</taxon>
        <taxon>Alphaproteobacteria</taxon>
        <taxon>Acetobacterales</taxon>
        <taxon>Acetobacteraceae</taxon>
        <taxon>Gluconobacter</taxon>
    </lineage>
</organism>
<comment type="function">
    <text evidence="1">Catalyzes the reversible interconversion of serine and glycine with tetrahydrofolate (THF) serving as the one-carbon carrier. This reaction serves as the major source of one-carbon groups required for the biosynthesis of purines, thymidylate, methionine, and other important biomolecules. Also exhibits THF-independent aldolase activity toward beta-hydroxyamino acids, producing glycine and aldehydes, via a retro-aldol mechanism.</text>
</comment>
<comment type="catalytic activity">
    <reaction evidence="1">
        <text>(6R)-5,10-methylene-5,6,7,8-tetrahydrofolate + glycine + H2O = (6S)-5,6,7,8-tetrahydrofolate + L-serine</text>
        <dbReference type="Rhea" id="RHEA:15481"/>
        <dbReference type="ChEBI" id="CHEBI:15377"/>
        <dbReference type="ChEBI" id="CHEBI:15636"/>
        <dbReference type="ChEBI" id="CHEBI:33384"/>
        <dbReference type="ChEBI" id="CHEBI:57305"/>
        <dbReference type="ChEBI" id="CHEBI:57453"/>
        <dbReference type="EC" id="2.1.2.1"/>
    </reaction>
</comment>
<comment type="cofactor">
    <cofactor evidence="1">
        <name>pyridoxal 5'-phosphate</name>
        <dbReference type="ChEBI" id="CHEBI:597326"/>
    </cofactor>
</comment>
<comment type="pathway">
    <text evidence="1">One-carbon metabolism; tetrahydrofolate interconversion.</text>
</comment>
<comment type="pathway">
    <text evidence="1">Amino-acid biosynthesis; glycine biosynthesis; glycine from L-serine: step 1/1.</text>
</comment>
<comment type="subunit">
    <text evidence="1">Homodimer.</text>
</comment>
<comment type="subcellular location">
    <subcellularLocation>
        <location evidence="1">Cytoplasm</location>
    </subcellularLocation>
</comment>
<comment type="similarity">
    <text evidence="1">Belongs to the SHMT family.</text>
</comment>
<evidence type="ECO:0000255" key="1">
    <source>
        <dbReference type="HAMAP-Rule" id="MF_00051"/>
    </source>
</evidence>
<gene>
    <name evidence="1" type="primary">glyA</name>
    <name type="ordered locus">GOX2310</name>
</gene>
<protein>
    <recommendedName>
        <fullName evidence="1">Serine hydroxymethyltransferase</fullName>
        <shortName evidence="1">SHMT</shortName>
        <shortName evidence="1">Serine methylase</shortName>
        <ecNumber evidence="1">2.1.2.1</ecNumber>
    </recommendedName>
</protein>
<sequence length="434" mass="46659">MSEHASQSTLNRFFHAPLKEVDAEVATILNEELTRQQDGIELIASENMASFAVMEAQGSVLTNKYAEGLPGKRYYGGCVDVDRVENLAIDRLKKIFGAEFANVQPHSGANANQAAFMALAKPGDTVLGLSLAAGGHLTHGAAPNYSGKWFNSVQYGVRAEDGLIDYDQMEALAREHKPKIIVAGSSAYPRVIDFARFRKIADEVGAYLMVDMAHFAGLVAAGLYPNPVPMADITTSTTHKTLRGPRGGIILTNNPDLAKKVNSAVFPGLQGGPLMHVIAGKAVAFGEALSDEFKAYQKRVLANARALADELQNRGFDIVTGGTDSHLILVDLRPKKVTGKLAEAILERAGITANKNAIPFDPEKPFVTSGIRLGSPAATARGFGEAEFREVGRMIDEVLTAALEEDNAEAVTARVHEEVKALCRRFPIYDRASA</sequence>
<name>GLYA_GLUOX</name>
<feature type="chain" id="PRO_0000234980" description="Serine hydroxymethyltransferase">
    <location>
        <begin position="1"/>
        <end position="434"/>
    </location>
</feature>
<feature type="binding site" evidence="1">
    <location>
        <position position="131"/>
    </location>
    <ligand>
        <name>(6S)-5,6,7,8-tetrahydrofolate</name>
        <dbReference type="ChEBI" id="CHEBI:57453"/>
    </ligand>
</feature>
<feature type="binding site" evidence="1">
    <location>
        <begin position="135"/>
        <end position="137"/>
    </location>
    <ligand>
        <name>(6S)-5,6,7,8-tetrahydrofolate</name>
        <dbReference type="ChEBI" id="CHEBI:57453"/>
    </ligand>
</feature>
<feature type="site" description="Plays an important role in substrate specificity" evidence="1">
    <location>
        <position position="239"/>
    </location>
</feature>
<feature type="modified residue" description="N6-(pyridoxal phosphate)lysine" evidence="1">
    <location>
        <position position="240"/>
    </location>
</feature>
<dbReference type="EC" id="2.1.2.1" evidence="1"/>
<dbReference type="EMBL" id="CP000009">
    <property type="protein sequence ID" value="AAW62043.1"/>
    <property type="molecule type" value="Genomic_DNA"/>
</dbReference>
<dbReference type="RefSeq" id="WP_011253813.1">
    <property type="nucleotide sequence ID" value="NC_006677.1"/>
</dbReference>
<dbReference type="SMR" id="Q5FNK4"/>
<dbReference type="STRING" id="290633.GOX2310"/>
<dbReference type="KEGG" id="gox:GOX2310"/>
<dbReference type="eggNOG" id="COG0112">
    <property type="taxonomic scope" value="Bacteria"/>
</dbReference>
<dbReference type="HOGENOM" id="CLU_022477_0_1_5"/>
<dbReference type="UniPathway" id="UPA00193"/>
<dbReference type="UniPathway" id="UPA00288">
    <property type="reaction ID" value="UER01023"/>
</dbReference>
<dbReference type="Proteomes" id="UP000006375">
    <property type="component" value="Chromosome"/>
</dbReference>
<dbReference type="GO" id="GO:0005829">
    <property type="term" value="C:cytosol"/>
    <property type="evidence" value="ECO:0007669"/>
    <property type="project" value="TreeGrafter"/>
</dbReference>
<dbReference type="GO" id="GO:0004372">
    <property type="term" value="F:glycine hydroxymethyltransferase activity"/>
    <property type="evidence" value="ECO:0007669"/>
    <property type="project" value="UniProtKB-UniRule"/>
</dbReference>
<dbReference type="GO" id="GO:0030170">
    <property type="term" value="F:pyridoxal phosphate binding"/>
    <property type="evidence" value="ECO:0007669"/>
    <property type="project" value="UniProtKB-UniRule"/>
</dbReference>
<dbReference type="GO" id="GO:0019264">
    <property type="term" value="P:glycine biosynthetic process from serine"/>
    <property type="evidence" value="ECO:0007669"/>
    <property type="project" value="UniProtKB-UniRule"/>
</dbReference>
<dbReference type="GO" id="GO:0035999">
    <property type="term" value="P:tetrahydrofolate interconversion"/>
    <property type="evidence" value="ECO:0007669"/>
    <property type="project" value="UniProtKB-UniRule"/>
</dbReference>
<dbReference type="CDD" id="cd00378">
    <property type="entry name" value="SHMT"/>
    <property type="match status" value="1"/>
</dbReference>
<dbReference type="FunFam" id="3.40.640.10:FF:000001">
    <property type="entry name" value="Serine hydroxymethyltransferase"/>
    <property type="match status" value="1"/>
</dbReference>
<dbReference type="FunFam" id="3.90.1150.10:FF:000003">
    <property type="entry name" value="Serine hydroxymethyltransferase"/>
    <property type="match status" value="1"/>
</dbReference>
<dbReference type="Gene3D" id="3.90.1150.10">
    <property type="entry name" value="Aspartate Aminotransferase, domain 1"/>
    <property type="match status" value="1"/>
</dbReference>
<dbReference type="Gene3D" id="3.40.640.10">
    <property type="entry name" value="Type I PLP-dependent aspartate aminotransferase-like (Major domain)"/>
    <property type="match status" value="1"/>
</dbReference>
<dbReference type="HAMAP" id="MF_00051">
    <property type="entry name" value="SHMT"/>
    <property type="match status" value="1"/>
</dbReference>
<dbReference type="InterPro" id="IPR015424">
    <property type="entry name" value="PyrdxlP-dep_Trfase"/>
</dbReference>
<dbReference type="InterPro" id="IPR015421">
    <property type="entry name" value="PyrdxlP-dep_Trfase_major"/>
</dbReference>
<dbReference type="InterPro" id="IPR015422">
    <property type="entry name" value="PyrdxlP-dep_Trfase_small"/>
</dbReference>
<dbReference type="InterPro" id="IPR001085">
    <property type="entry name" value="Ser_HO-MeTrfase"/>
</dbReference>
<dbReference type="InterPro" id="IPR049943">
    <property type="entry name" value="Ser_HO-MeTrfase-like"/>
</dbReference>
<dbReference type="InterPro" id="IPR019798">
    <property type="entry name" value="Ser_HO-MeTrfase_PLP_BS"/>
</dbReference>
<dbReference type="InterPro" id="IPR039429">
    <property type="entry name" value="SHMT-like_dom"/>
</dbReference>
<dbReference type="NCBIfam" id="NF000586">
    <property type="entry name" value="PRK00011.1"/>
    <property type="match status" value="1"/>
</dbReference>
<dbReference type="PANTHER" id="PTHR11680">
    <property type="entry name" value="SERINE HYDROXYMETHYLTRANSFERASE"/>
    <property type="match status" value="1"/>
</dbReference>
<dbReference type="PANTHER" id="PTHR11680:SF35">
    <property type="entry name" value="SERINE HYDROXYMETHYLTRANSFERASE 1"/>
    <property type="match status" value="1"/>
</dbReference>
<dbReference type="Pfam" id="PF00464">
    <property type="entry name" value="SHMT"/>
    <property type="match status" value="1"/>
</dbReference>
<dbReference type="PIRSF" id="PIRSF000412">
    <property type="entry name" value="SHMT"/>
    <property type="match status" value="1"/>
</dbReference>
<dbReference type="SUPFAM" id="SSF53383">
    <property type="entry name" value="PLP-dependent transferases"/>
    <property type="match status" value="1"/>
</dbReference>
<dbReference type="PROSITE" id="PS00096">
    <property type="entry name" value="SHMT"/>
    <property type="match status" value="1"/>
</dbReference>
<keyword id="KW-0028">Amino-acid biosynthesis</keyword>
<keyword id="KW-0963">Cytoplasm</keyword>
<keyword id="KW-0554">One-carbon metabolism</keyword>
<keyword id="KW-0663">Pyridoxal phosphate</keyword>
<keyword id="KW-1185">Reference proteome</keyword>
<keyword id="KW-0808">Transferase</keyword>
<proteinExistence type="inferred from homology"/>
<accession>Q5FNK4</accession>